<keyword id="KW-0963">Cytoplasm</keyword>
<keyword id="KW-0342">GTP-binding</keyword>
<keyword id="KW-0396">Initiation factor</keyword>
<keyword id="KW-0547">Nucleotide-binding</keyword>
<keyword id="KW-0648">Protein biosynthesis</keyword>
<sequence>MEKAKLTKNLKLKIKNAQLTKAAGLDKLKQKLAQAGSSDTKNSSEKPSAKVAEKVVKKKSVVDPSVSATPESVSSETSPRRIRAKNRSSFVSEDLEVSSPVPVDSDTTSSMPPVEEEIASSTDSEPEVIEVTQPPIEEKSEVVTKVPPTPLKEPEVVVKKDPPKSVVGIKSNFGPTGKHINHLLAKTFKAPKKEDKPAPKERSGQAQAKPQQSSEASSENKPHSPNNNRSSQPFYRRDTSKKPGSDFRDRAKKDDNPKAFTGRDRYGLNDGSDDDKWRKKRVQKTKKHYDEHTIQRPTHIKVPLPITIKDLAAEMKLKASELIQKMFIHGMTYVVNDVLDNETTVQFIGLEFGCTIDIDSSEQDKLCIESNTVKEEIQETDPSKLIIRPPIVAFMGHVDHGKTTLIDSLRKSNIAAVEAGAITQHMGAFCCSTPVGNITILDTPGHEAFSAMRARGAEVCDIVVLVVAGDEGIKEQTLEAVKHARAANITIVVAINKCDKPNFNAETIYRQLSEINLLPEAWGGTTVTVNTSAKTGEGLPELLEMLALQAEVLELKANPSARARGIVIESELHKGLGAVATILVQNGTLHLGEALVFNDCYGKVKTMHDEHNRLMKVASPSVPALITGLSSMPKAGDPFVVVKNEKIAKDIIGARLAGQQKFALQKKRPNFDAMLQNKKILKLIIKADVQGSIEALASSILKIVSDKVSAEILSNSVGEISESDIRLAAASKAVIIGFHTGIESHAESLIKSLGVKVQLFNIIYHAVDAVKEMMTALLDPIAEEKNLGSAEIKETFKSSQLGTIYGCLVSEGVMTRNQKVRVVRNNDVLWKGTLSSLKRIKEDVKEVKKGLECGILLEGYQNAQVGDILQCYEVIYHPQKL</sequence>
<evidence type="ECO:0000250" key="1"/>
<evidence type="ECO:0000255" key="2">
    <source>
        <dbReference type="HAMAP-Rule" id="MF_00100"/>
    </source>
</evidence>
<evidence type="ECO:0000256" key="3">
    <source>
        <dbReference type="SAM" id="MobiDB-lite"/>
    </source>
</evidence>
<accession>Q254H4</accession>
<gene>
    <name evidence="2" type="primary">infB</name>
    <name type="ordered locus">CF0542</name>
</gene>
<name>IF2_CHLFF</name>
<comment type="function">
    <text evidence="2">One of the essential components for the initiation of protein synthesis. Protects formylmethionyl-tRNA from spontaneous hydrolysis and promotes its binding to the 30S ribosomal subunits. Also involved in the hydrolysis of GTP during the formation of the 70S ribosomal complex.</text>
</comment>
<comment type="subcellular location">
    <subcellularLocation>
        <location evidence="2">Cytoplasm</location>
    </subcellularLocation>
</comment>
<comment type="similarity">
    <text evidence="2">Belongs to the TRAFAC class translation factor GTPase superfamily. Classic translation factor GTPase family. IF-2 subfamily.</text>
</comment>
<dbReference type="EMBL" id="AP006861">
    <property type="protein sequence ID" value="BAE81314.1"/>
    <property type="molecule type" value="Genomic_DNA"/>
</dbReference>
<dbReference type="RefSeq" id="WP_011458094.1">
    <property type="nucleotide sequence ID" value="NC_007899.1"/>
</dbReference>
<dbReference type="SMR" id="Q254H4"/>
<dbReference type="STRING" id="264202.CF0542"/>
<dbReference type="KEGG" id="cfe:CF0542"/>
<dbReference type="eggNOG" id="COG0532">
    <property type="taxonomic scope" value="Bacteria"/>
</dbReference>
<dbReference type="HOGENOM" id="CLU_006301_3_2_0"/>
<dbReference type="OrthoDB" id="9811804at2"/>
<dbReference type="Proteomes" id="UP000001260">
    <property type="component" value="Chromosome"/>
</dbReference>
<dbReference type="GO" id="GO:0005829">
    <property type="term" value="C:cytosol"/>
    <property type="evidence" value="ECO:0007669"/>
    <property type="project" value="TreeGrafter"/>
</dbReference>
<dbReference type="GO" id="GO:0005525">
    <property type="term" value="F:GTP binding"/>
    <property type="evidence" value="ECO:0007669"/>
    <property type="project" value="UniProtKB-KW"/>
</dbReference>
<dbReference type="GO" id="GO:0003924">
    <property type="term" value="F:GTPase activity"/>
    <property type="evidence" value="ECO:0007669"/>
    <property type="project" value="UniProtKB-UniRule"/>
</dbReference>
<dbReference type="GO" id="GO:0003743">
    <property type="term" value="F:translation initiation factor activity"/>
    <property type="evidence" value="ECO:0007669"/>
    <property type="project" value="UniProtKB-UniRule"/>
</dbReference>
<dbReference type="CDD" id="cd01887">
    <property type="entry name" value="IF2_eIF5B"/>
    <property type="match status" value="1"/>
</dbReference>
<dbReference type="CDD" id="cd03702">
    <property type="entry name" value="IF2_mtIF2_II"/>
    <property type="match status" value="1"/>
</dbReference>
<dbReference type="CDD" id="cd03692">
    <property type="entry name" value="mtIF2_IVc"/>
    <property type="match status" value="1"/>
</dbReference>
<dbReference type="FunFam" id="2.40.30.10:FF:000008">
    <property type="entry name" value="Translation initiation factor IF-2"/>
    <property type="match status" value="1"/>
</dbReference>
<dbReference type="FunFam" id="2.40.30.10:FF:000054">
    <property type="entry name" value="Translation initiation factor IF-2"/>
    <property type="match status" value="1"/>
</dbReference>
<dbReference type="FunFam" id="3.40.50.10050:FF:000001">
    <property type="entry name" value="Translation initiation factor IF-2"/>
    <property type="match status" value="1"/>
</dbReference>
<dbReference type="FunFam" id="3.40.50.300:FF:000019">
    <property type="entry name" value="Translation initiation factor IF-2"/>
    <property type="match status" value="1"/>
</dbReference>
<dbReference type="Gene3D" id="3.40.50.300">
    <property type="entry name" value="P-loop containing nucleotide triphosphate hydrolases"/>
    <property type="match status" value="1"/>
</dbReference>
<dbReference type="Gene3D" id="2.40.30.10">
    <property type="entry name" value="Translation factors"/>
    <property type="match status" value="2"/>
</dbReference>
<dbReference type="Gene3D" id="3.40.50.10050">
    <property type="entry name" value="Translation initiation factor IF- 2, domain 3"/>
    <property type="match status" value="1"/>
</dbReference>
<dbReference type="HAMAP" id="MF_00100_B">
    <property type="entry name" value="IF_2_B"/>
    <property type="match status" value="1"/>
</dbReference>
<dbReference type="InterPro" id="IPR053905">
    <property type="entry name" value="EF-G-like_DII"/>
</dbReference>
<dbReference type="InterPro" id="IPR004161">
    <property type="entry name" value="EFTu-like_2"/>
</dbReference>
<dbReference type="InterPro" id="IPR044145">
    <property type="entry name" value="IF2_II"/>
</dbReference>
<dbReference type="InterPro" id="IPR006847">
    <property type="entry name" value="IF2_N"/>
</dbReference>
<dbReference type="InterPro" id="IPR027417">
    <property type="entry name" value="P-loop_NTPase"/>
</dbReference>
<dbReference type="InterPro" id="IPR005225">
    <property type="entry name" value="Small_GTP-bd"/>
</dbReference>
<dbReference type="InterPro" id="IPR000795">
    <property type="entry name" value="T_Tr_GTP-bd_dom"/>
</dbReference>
<dbReference type="InterPro" id="IPR000178">
    <property type="entry name" value="TF_IF2_bacterial-like"/>
</dbReference>
<dbReference type="InterPro" id="IPR015760">
    <property type="entry name" value="TIF_IF2"/>
</dbReference>
<dbReference type="InterPro" id="IPR023115">
    <property type="entry name" value="TIF_IF2_dom3"/>
</dbReference>
<dbReference type="InterPro" id="IPR036925">
    <property type="entry name" value="TIF_IF2_dom3_sf"/>
</dbReference>
<dbReference type="InterPro" id="IPR009000">
    <property type="entry name" value="Transl_B-barrel_sf"/>
</dbReference>
<dbReference type="NCBIfam" id="TIGR00487">
    <property type="entry name" value="IF-2"/>
    <property type="match status" value="1"/>
</dbReference>
<dbReference type="NCBIfam" id="TIGR00231">
    <property type="entry name" value="small_GTP"/>
    <property type="match status" value="1"/>
</dbReference>
<dbReference type="PANTHER" id="PTHR43381:SF5">
    <property type="entry name" value="TR-TYPE G DOMAIN-CONTAINING PROTEIN"/>
    <property type="match status" value="1"/>
</dbReference>
<dbReference type="PANTHER" id="PTHR43381">
    <property type="entry name" value="TRANSLATION INITIATION FACTOR IF-2-RELATED"/>
    <property type="match status" value="1"/>
</dbReference>
<dbReference type="Pfam" id="PF22042">
    <property type="entry name" value="EF-G_D2"/>
    <property type="match status" value="1"/>
</dbReference>
<dbReference type="Pfam" id="PF00009">
    <property type="entry name" value="GTP_EFTU"/>
    <property type="match status" value="1"/>
</dbReference>
<dbReference type="Pfam" id="PF03144">
    <property type="entry name" value="GTP_EFTU_D2"/>
    <property type="match status" value="1"/>
</dbReference>
<dbReference type="Pfam" id="PF11987">
    <property type="entry name" value="IF-2"/>
    <property type="match status" value="1"/>
</dbReference>
<dbReference type="Pfam" id="PF04760">
    <property type="entry name" value="IF2_N"/>
    <property type="match status" value="1"/>
</dbReference>
<dbReference type="SUPFAM" id="SSF52156">
    <property type="entry name" value="Initiation factor IF2/eIF5b, domain 3"/>
    <property type="match status" value="1"/>
</dbReference>
<dbReference type="SUPFAM" id="SSF52540">
    <property type="entry name" value="P-loop containing nucleoside triphosphate hydrolases"/>
    <property type="match status" value="1"/>
</dbReference>
<dbReference type="SUPFAM" id="SSF50447">
    <property type="entry name" value="Translation proteins"/>
    <property type="match status" value="2"/>
</dbReference>
<dbReference type="PROSITE" id="PS51722">
    <property type="entry name" value="G_TR_2"/>
    <property type="match status" value="1"/>
</dbReference>
<dbReference type="PROSITE" id="PS01176">
    <property type="entry name" value="IF2"/>
    <property type="match status" value="1"/>
</dbReference>
<protein>
    <recommendedName>
        <fullName evidence="2">Translation initiation factor IF-2</fullName>
    </recommendedName>
</protein>
<reference key="1">
    <citation type="journal article" date="2006" name="DNA Res.">
        <title>Genome sequence of the cat pathogen, Chlamydophila felis.</title>
        <authorList>
            <person name="Azuma Y."/>
            <person name="Hirakawa H."/>
            <person name="Yamashita A."/>
            <person name="Cai Y."/>
            <person name="Rahman M.A."/>
            <person name="Suzuki H."/>
            <person name="Mitaku S."/>
            <person name="Toh H."/>
            <person name="Goto S."/>
            <person name="Murakami T."/>
            <person name="Sugi K."/>
            <person name="Hayashi H."/>
            <person name="Fukushi H."/>
            <person name="Hattori M."/>
            <person name="Kuhara S."/>
            <person name="Shirai M."/>
        </authorList>
    </citation>
    <scope>NUCLEOTIDE SEQUENCE [LARGE SCALE GENOMIC DNA]</scope>
    <source>
        <strain>Fe/C-56</strain>
    </source>
</reference>
<feature type="chain" id="PRO_1000008224" description="Translation initiation factor IF-2">
    <location>
        <begin position="1"/>
        <end position="881"/>
    </location>
</feature>
<feature type="domain" description="tr-type G">
    <location>
        <begin position="387"/>
        <end position="556"/>
    </location>
</feature>
<feature type="region of interest" description="Disordered" evidence="3">
    <location>
        <begin position="31"/>
        <end position="147"/>
    </location>
</feature>
<feature type="region of interest" description="Disordered" evidence="3">
    <location>
        <begin position="165"/>
        <end position="291"/>
    </location>
</feature>
<feature type="region of interest" description="G1" evidence="1">
    <location>
        <begin position="396"/>
        <end position="403"/>
    </location>
</feature>
<feature type="region of interest" description="G2" evidence="1">
    <location>
        <begin position="421"/>
        <end position="425"/>
    </location>
</feature>
<feature type="region of interest" description="G3" evidence="1">
    <location>
        <begin position="442"/>
        <end position="445"/>
    </location>
</feature>
<feature type="region of interest" description="G4" evidence="1">
    <location>
        <begin position="496"/>
        <end position="499"/>
    </location>
</feature>
<feature type="region of interest" description="G5" evidence="1">
    <location>
        <begin position="532"/>
        <end position="534"/>
    </location>
</feature>
<feature type="compositionally biased region" description="Basic and acidic residues" evidence="3">
    <location>
        <begin position="42"/>
        <end position="55"/>
    </location>
</feature>
<feature type="compositionally biased region" description="Polar residues" evidence="3">
    <location>
        <begin position="68"/>
        <end position="77"/>
    </location>
</feature>
<feature type="compositionally biased region" description="Acidic residues" evidence="3">
    <location>
        <begin position="114"/>
        <end position="128"/>
    </location>
</feature>
<feature type="compositionally biased region" description="Basic and acidic residues" evidence="3">
    <location>
        <begin position="191"/>
        <end position="203"/>
    </location>
</feature>
<feature type="compositionally biased region" description="Polar residues" evidence="3">
    <location>
        <begin position="204"/>
        <end position="233"/>
    </location>
</feature>
<feature type="compositionally biased region" description="Basic and acidic residues" evidence="3">
    <location>
        <begin position="235"/>
        <end position="267"/>
    </location>
</feature>
<feature type="compositionally biased region" description="Basic residues" evidence="3">
    <location>
        <begin position="278"/>
        <end position="287"/>
    </location>
</feature>
<feature type="binding site" evidence="2">
    <location>
        <begin position="396"/>
        <end position="403"/>
    </location>
    <ligand>
        <name>GTP</name>
        <dbReference type="ChEBI" id="CHEBI:37565"/>
    </ligand>
</feature>
<feature type="binding site" evidence="2">
    <location>
        <begin position="442"/>
        <end position="446"/>
    </location>
    <ligand>
        <name>GTP</name>
        <dbReference type="ChEBI" id="CHEBI:37565"/>
    </ligand>
</feature>
<feature type="binding site" evidence="2">
    <location>
        <begin position="496"/>
        <end position="499"/>
    </location>
    <ligand>
        <name>GTP</name>
        <dbReference type="ChEBI" id="CHEBI:37565"/>
    </ligand>
</feature>
<organism>
    <name type="scientific">Chlamydia felis (strain Fe/C-56)</name>
    <name type="common">Chlamydophila felis</name>
    <dbReference type="NCBI Taxonomy" id="264202"/>
    <lineage>
        <taxon>Bacteria</taxon>
        <taxon>Pseudomonadati</taxon>
        <taxon>Chlamydiota</taxon>
        <taxon>Chlamydiia</taxon>
        <taxon>Chlamydiales</taxon>
        <taxon>Chlamydiaceae</taxon>
        <taxon>Chlamydia/Chlamydophila group</taxon>
        <taxon>Chlamydia</taxon>
    </lineage>
</organism>
<proteinExistence type="inferred from homology"/>